<reference key="1">
    <citation type="journal article" date="2000" name="DNA Res.">
        <title>Structural analysis of Arabidopsis thaliana chromosome 3. I. Sequence features of the regions of 4,504,864 bp covered by sixty P1 and TAC clones.</title>
        <authorList>
            <person name="Sato S."/>
            <person name="Nakamura Y."/>
            <person name="Kaneko T."/>
            <person name="Katoh T."/>
            <person name="Asamizu E."/>
            <person name="Tabata S."/>
        </authorList>
    </citation>
    <scope>NUCLEOTIDE SEQUENCE [LARGE SCALE GENOMIC DNA]</scope>
    <source>
        <strain>cv. Columbia</strain>
    </source>
</reference>
<reference key="2">
    <citation type="journal article" date="2017" name="Plant J.">
        <title>Araport11: a complete reannotation of the Arabidopsis thaliana reference genome.</title>
        <authorList>
            <person name="Cheng C.Y."/>
            <person name="Krishnakumar V."/>
            <person name="Chan A.P."/>
            <person name="Thibaud-Nissen F."/>
            <person name="Schobel S."/>
            <person name="Town C.D."/>
        </authorList>
    </citation>
    <scope>GENOME REANNOTATION</scope>
    <source>
        <strain>cv. Columbia</strain>
    </source>
</reference>
<reference key="3">
    <citation type="submission" date="2009-03" db="EMBL/GenBank/DDBJ databases">
        <title>ORF cloning and analysis of Arabidopsis transcription factor genes.</title>
        <authorList>
            <person name="Fujita M."/>
            <person name="Mizukado S."/>
            <person name="Seki M."/>
            <person name="Shinozaki K."/>
            <person name="Mitsuda N."/>
            <person name="Takiguchi Y."/>
            <person name="Takagi M."/>
        </authorList>
    </citation>
    <scope>NUCLEOTIDE SEQUENCE [LARGE SCALE MRNA]</scope>
</reference>
<reference key="4">
    <citation type="submission" date="2002-03" db="EMBL/GenBank/DDBJ databases">
        <title>Full-length cDNA from Arabidopsis thaliana.</title>
        <authorList>
            <person name="Brover V.V."/>
            <person name="Troukhan M.E."/>
            <person name="Alexandrov N.A."/>
            <person name="Lu Y.-P."/>
            <person name="Flavell R.B."/>
            <person name="Feldmann K.A."/>
        </authorList>
    </citation>
    <scope>NUCLEOTIDE SEQUENCE [LARGE SCALE MRNA]</scope>
</reference>
<reference key="5">
    <citation type="journal article" date="2009" name="Plant Cell">
        <title>The Arabidopsis B-box zinc finger family.</title>
        <authorList>
            <person name="Khanna R."/>
            <person name="Kronmiller B."/>
            <person name="Maszle D.R."/>
            <person name="Coupland G."/>
            <person name="Holm M."/>
            <person name="Mizuno T."/>
            <person name="Wu S.H."/>
        </authorList>
    </citation>
    <scope>GENE FAMILY</scope>
    <scope>NOMENCLATURE</scope>
</reference>
<reference key="6">
    <citation type="journal article" date="2016" name="PLoS Genet.">
        <title>Microprotein-mediated recruitment of CONSTANS into a TOPLESS trimeric complex represses flowering in Arabidopsis.</title>
        <authorList>
            <person name="Graeff M."/>
            <person name="Straub D."/>
            <person name="Eguen T."/>
            <person name="Dolde U."/>
            <person name="Rodrigues V."/>
            <person name="Brandt R."/>
            <person name="Wenkel S."/>
        </authorList>
    </citation>
    <scope>FUNCTION</scope>
</reference>
<organism evidence="8">
    <name type="scientific">Arabidopsis thaliana</name>
    <name type="common">Mouse-ear cress</name>
    <dbReference type="NCBI Taxonomy" id="3702"/>
    <lineage>
        <taxon>Eukaryota</taxon>
        <taxon>Viridiplantae</taxon>
        <taxon>Streptophyta</taxon>
        <taxon>Embryophyta</taxon>
        <taxon>Tracheophyta</taxon>
        <taxon>Spermatophyta</taxon>
        <taxon>Magnoliopsida</taxon>
        <taxon>eudicotyledons</taxon>
        <taxon>Gunneridae</taxon>
        <taxon>Pentapetalae</taxon>
        <taxon>rosids</taxon>
        <taxon>malvids</taxon>
        <taxon>Brassicales</taxon>
        <taxon>Brassicaceae</taxon>
        <taxon>Camelineae</taxon>
        <taxon>Arabidopsis</taxon>
    </lineage>
</organism>
<keyword id="KW-0479">Metal-binding</keyword>
<keyword id="KW-1185">Reference proteome</keyword>
<keyword id="KW-0862">Zinc</keyword>
<keyword id="KW-0863">Zinc-finger</keyword>
<sequence length="121" mass="13659">MCRGLNNEESRRSDGGGCRSLCTRPSVPVRCELCDGDASVFCEADSAFLCRKCDRWVHGANFLAWRHVRRVLCTSCQKLTRRCLVGDHDFHVVLPSVTTVGETTVENRSEQDNHEVPFVFL</sequence>
<protein>
    <recommendedName>
        <fullName evidence="4">B-box domain protein 31</fullName>
        <shortName evidence="4">AtBBX31</shortName>
    </recommendedName>
    <alternativeName>
        <fullName evidence="5">Microprotein 1B</fullName>
    </alternativeName>
</protein>
<name>MIP1B_ARATH</name>
<feature type="chain" id="PRO_0000436351" description="B-box domain protein 31">
    <location>
        <begin position="1"/>
        <end position="121"/>
    </location>
</feature>
<feature type="zinc finger region" description="B box-type; atypical" evidence="2">
    <location>
        <begin position="26"/>
        <end position="72"/>
    </location>
</feature>
<feature type="short sequence motif" description="PFVFL" evidence="6">
    <location>
        <begin position="117"/>
        <end position="121"/>
    </location>
</feature>
<proteinExistence type="evidence at transcript level"/>
<gene>
    <name evidence="5" type="primary">MIP1B</name>
    <name evidence="4" type="synonym">BBX31</name>
    <name evidence="7" type="ordered locus">At3g21890</name>
</gene>
<evidence type="ECO:0000250" key="1">
    <source>
        <dbReference type="UniProtKB" id="Q1G3I2"/>
    </source>
</evidence>
<evidence type="ECO:0000255" key="2">
    <source>
        <dbReference type="PROSITE-ProRule" id="PRU00024"/>
    </source>
</evidence>
<evidence type="ECO:0000269" key="3">
    <source>
    </source>
</evidence>
<evidence type="ECO:0000303" key="4">
    <source>
    </source>
</evidence>
<evidence type="ECO:0000303" key="5">
    <source>
    </source>
</evidence>
<evidence type="ECO:0000305" key="6"/>
<evidence type="ECO:0000312" key="7">
    <source>
        <dbReference type="Araport" id="AT3G21890"/>
    </source>
</evidence>
<evidence type="ECO:0000312" key="8">
    <source>
        <dbReference type="EMBL" id="BAB01366.1"/>
    </source>
</evidence>
<dbReference type="EMBL" id="AB028622">
    <property type="protein sequence ID" value="BAB01366.1"/>
    <property type="molecule type" value="Genomic_DNA"/>
</dbReference>
<dbReference type="EMBL" id="CP002686">
    <property type="protein sequence ID" value="AEE76563.1"/>
    <property type="molecule type" value="Genomic_DNA"/>
</dbReference>
<dbReference type="EMBL" id="AB493627">
    <property type="protein sequence ID" value="BAH30465.1"/>
    <property type="molecule type" value="mRNA"/>
</dbReference>
<dbReference type="EMBL" id="AY086564">
    <property type="protein sequence ID" value="AAM63627.1"/>
    <property type="molecule type" value="mRNA"/>
</dbReference>
<dbReference type="RefSeq" id="NP_188827.1">
    <property type="nucleotide sequence ID" value="NM_113085.4"/>
</dbReference>
<dbReference type="SMR" id="Q9LRM4"/>
<dbReference type="FunCoup" id="Q9LRM4">
    <property type="interactions" value="11"/>
</dbReference>
<dbReference type="IntAct" id="Q9LRM4">
    <property type="interactions" value="10"/>
</dbReference>
<dbReference type="STRING" id="3702.Q9LRM4"/>
<dbReference type="PaxDb" id="3702-AT3G21890.1"/>
<dbReference type="EnsemblPlants" id="AT3G21890.1">
    <property type="protein sequence ID" value="AT3G21890.1"/>
    <property type="gene ID" value="AT3G21890"/>
</dbReference>
<dbReference type="GeneID" id="821744"/>
<dbReference type="Gramene" id="AT3G21890.1">
    <property type="protein sequence ID" value="AT3G21890.1"/>
    <property type="gene ID" value="AT3G21890"/>
</dbReference>
<dbReference type="KEGG" id="ath:AT3G21890"/>
<dbReference type="Araport" id="AT3G21890"/>
<dbReference type="TAIR" id="AT3G21890">
    <property type="gene designation" value="BBX31"/>
</dbReference>
<dbReference type="eggNOG" id="ENOG502S3MI">
    <property type="taxonomic scope" value="Eukaryota"/>
</dbReference>
<dbReference type="HOGENOM" id="CLU_159621_0_0_1"/>
<dbReference type="InParanoid" id="Q9LRM4"/>
<dbReference type="OMA" id="WVHRANF"/>
<dbReference type="OrthoDB" id="153872at2759"/>
<dbReference type="PhylomeDB" id="Q9LRM4"/>
<dbReference type="PRO" id="PR:Q9LRM4"/>
<dbReference type="Proteomes" id="UP000006548">
    <property type="component" value="Chromosome 3"/>
</dbReference>
<dbReference type="ExpressionAtlas" id="Q9LRM4">
    <property type="expression patterns" value="baseline and differential"/>
</dbReference>
<dbReference type="GO" id="GO:0005634">
    <property type="term" value="C:nucleus"/>
    <property type="evidence" value="ECO:0000250"/>
    <property type="project" value="UniProtKB"/>
</dbReference>
<dbReference type="GO" id="GO:0003700">
    <property type="term" value="F:DNA-binding transcription factor activity"/>
    <property type="evidence" value="ECO:0000250"/>
    <property type="project" value="TAIR"/>
</dbReference>
<dbReference type="GO" id="GO:0030674">
    <property type="term" value="F:protein-macromolecule adaptor activity"/>
    <property type="evidence" value="ECO:0000250"/>
    <property type="project" value="UniProtKB"/>
</dbReference>
<dbReference type="GO" id="GO:0000976">
    <property type="term" value="F:transcription cis-regulatory region binding"/>
    <property type="evidence" value="ECO:0000353"/>
    <property type="project" value="TAIR"/>
</dbReference>
<dbReference type="GO" id="GO:0008270">
    <property type="term" value="F:zinc ion binding"/>
    <property type="evidence" value="ECO:0007669"/>
    <property type="project" value="UniProtKB-KW"/>
</dbReference>
<dbReference type="GO" id="GO:0007623">
    <property type="term" value="P:circadian rhythm"/>
    <property type="evidence" value="ECO:0000270"/>
    <property type="project" value="UniProtKB"/>
</dbReference>
<dbReference type="GO" id="GO:0006355">
    <property type="term" value="P:regulation of DNA-templated transcription"/>
    <property type="evidence" value="ECO:0000304"/>
    <property type="project" value="TAIR"/>
</dbReference>
<dbReference type="GO" id="GO:0009909">
    <property type="term" value="P:regulation of flower development"/>
    <property type="evidence" value="ECO:0000315"/>
    <property type="project" value="UniProtKB"/>
</dbReference>
<dbReference type="GO" id="GO:0010224">
    <property type="term" value="P:response to UV-B"/>
    <property type="evidence" value="ECO:0000270"/>
    <property type="project" value="TAIR"/>
</dbReference>
<dbReference type="CDD" id="cd19821">
    <property type="entry name" value="Bbox1_BBX-like"/>
    <property type="match status" value="1"/>
</dbReference>
<dbReference type="InterPro" id="IPR049808">
    <property type="entry name" value="CONSTANS-like_Bbox1"/>
</dbReference>
<dbReference type="InterPro" id="IPR000315">
    <property type="entry name" value="Znf_B-box"/>
</dbReference>
<dbReference type="PANTHER" id="PTHR31717:SF142">
    <property type="entry name" value="B-BOX DOMAIN PROTEIN 30-RELATED"/>
    <property type="match status" value="1"/>
</dbReference>
<dbReference type="PANTHER" id="PTHR31717">
    <property type="entry name" value="ZINC FINGER PROTEIN CONSTANS-LIKE 10"/>
    <property type="match status" value="1"/>
</dbReference>
<dbReference type="SMART" id="SM00336">
    <property type="entry name" value="BBOX"/>
    <property type="match status" value="1"/>
</dbReference>
<comment type="function">
    <text evidence="1 3">Developmental regulator acting by forming heterodimeric complexes, that sequester CO and CO-like (COL) proteins into non-functional complexes (PubMed:27015278). Involved in the CO-mediated long-day flowering-promotion pathway (PubMed:27015278). Engages CO and the transcriptional repressor TPL in a tripartite complex (By similarity).</text>
</comment>
<comment type="tissue specificity">
    <text evidence="3">Highly expressed in shoot apical meristems and in vascular tissues of leaves. Also detected in petioles.</text>
</comment>
<comment type="induction">
    <text evidence="3">Circadian-regulation. Peak of expression toward the end of the dark period in both long day and short day photoperiods.</text>
</comment>
<accession>Q9LRM4</accession>